<feature type="signal peptide" evidence="3">
    <location>
        <begin position="1"/>
        <end position="25"/>
    </location>
</feature>
<feature type="propeptide" id="PRO_0000290036" description="Activation peptide" evidence="1">
    <location>
        <begin position="26"/>
        <end position="74"/>
    </location>
</feature>
<feature type="chain" id="PRO_0000026680" description="Serglycin">
    <location>
        <begin position="75"/>
        <end position="152"/>
    </location>
</feature>
<feature type="repeat" description="1">
    <location>
        <begin position="89"/>
        <end position="90"/>
    </location>
</feature>
<feature type="repeat" description="2">
    <location>
        <begin position="91"/>
        <end position="92"/>
    </location>
</feature>
<feature type="repeat" description="3">
    <location>
        <begin position="93"/>
        <end position="94"/>
    </location>
</feature>
<feature type="repeat" description="4">
    <location>
        <begin position="95"/>
        <end position="96"/>
    </location>
</feature>
<feature type="repeat" description="5">
    <location>
        <begin position="97"/>
        <end position="98"/>
    </location>
</feature>
<feature type="repeat" description="6">
    <location>
        <begin position="99"/>
        <end position="100"/>
    </location>
</feature>
<feature type="repeat" description="7">
    <location>
        <begin position="101"/>
        <end position="102"/>
    </location>
</feature>
<feature type="repeat" description="8">
    <location>
        <begin position="103"/>
        <end position="104"/>
    </location>
</feature>
<feature type="repeat" description="9">
    <location>
        <begin position="105"/>
        <end position="106"/>
    </location>
</feature>
<feature type="repeat" description="10">
    <location>
        <begin position="107"/>
        <end position="108"/>
    </location>
</feature>
<feature type="region of interest" description="Disordered" evidence="4">
    <location>
        <begin position="66"/>
        <end position="115"/>
    </location>
</feature>
<feature type="region of interest" description="10 X 2 AA tandem repeats of G-S">
    <location>
        <begin position="89"/>
        <end position="108"/>
    </location>
</feature>
<feature type="compositionally biased region" description="Gly residues" evidence="4">
    <location>
        <begin position="90"/>
        <end position="110"/>
    </location>
</feature>
<feature type="glycosylation site" description="O-linked (Xyl...) (glycosaminoglycan) serine" evidence="1">
    <location>
        <position position="92"/>
    </location>
</feature>
<feature type="glycosylation site" description="O-linked (Xyl...) (glycosaminoglycan) serine" evidence="1">
    <location>
        <position position="94"/>
    </location>
</feature>
<feature type="glycosylation site" description="O-linked (Xyl...) (glycosaminoglycan) serine" evidence="3">
    <location>
        <position position="98"/>
    </location>
</feature>
<feature type="glycosylation site" description="O-linked (Xyl...) (glycosaminoglycan) serine" evidence="3">
    <location>
        <position position="100"/>
    </location>
</feature>
<feature type="glycosylation site" description="O-linked (Xyl...) (glycosaminoglycan) serine" evidence="3">
    <location>
        <position position="102"/>
    </location>
</feature>
<feature type="glycosylation site" description="O-linked (Xyl...) (glycosaminoglycan) serine" evidence="3">
    <location>
        <position position="104"/>
    </location>
</feature>
<feature type="glycosylation site" description="O-linked (Xyl...) (glycosaminoglycan) serine" evidence="3">
    <location>
        <position position="106"/>
    </location>
</feature>
<feature type="glycosylation site" description="O-linked (Xyl...) (glycosaminoglycan) serine" evidence="3">
    <location>
        <position position="108"/>
    </location>
</feature>
<feature type="disulfide bond" evidence="3">
    <location>
        <begin position="38"/>
        <end position="47"/>
    </location>
</feature>
<evidence type="ECO:0000250" key="1"/>
<evidence type="ECO:0000250" key="2">
    <source>
        <dbReference type="UniProtKB" id="P10124"/>
    </source>
</evidence>
<evidence type="ECO:0000255" key="3"/>
<evidence type="ECO:0000256" key="4">
    <source>
        <dbReference type="SAM" id="MobiDB-lite"/>
    </source>
</evidence>
<evidence type="ECO:0000269" key="5">
    <source>
    </source>
</evidence>
<evidence type="ECO:0000269" key="6">
    <source>
    </source>
</evidence>
<evidence type="ECO:0000269" key="7">
    <source>
    </source>
</evidence>
<evidence type="ECO:0000269" key="8">
    <source>
    </source>
</evidence>
<evidence type="ECO:0000269" key="9">
    <source>
    </source>
</evidence>
<evidence type="ECO:0000269" key="10">
    <source>
    </source>
</evidence>
<evidence type="ECO:0000269" key="11">
    <source>
    </source>
</evidence>
<evidence type="ECO:0000269" key="12">
    <source>
    </source>
</evidence>
<evidence type="ECO:0000269" key="13">
    <source>
    </source>
</evidence>
<evidence type="ECO:0000305" key="14"/>
<proteinExistence type="evidence at protein level"/>
<gene>
    <name type="primary">Srgn</name>
    <name type="synonym">Prg</name>
    <name type="synonym">Prg1</name>
</gene>
<dbReference type="EMBL" id="X16133">
    <property type="protein sequence ID" value="CAA34259.1"/>
    <property type="molecule type" value="mRNA"/>
</dbReference>
<dbReference type="EMBL" id="M27393">
    <property type="protein sequence ID" value="AAA39965.1"/>
    <property type="molecule type" value="Genomic_DNA"/>
</dbReference>
<dbReference type="EMBL" id="M27391">
    <property type="protein sequence ID" value="AAA39965.1"/>
    <property type="status" value="JOINED"/>
    <property type="molecule type" value="Genomic_DNA"/>
</dbReference>
<dbReference type="EMBL" id="M27392">
    <property type="protein sequence ID" value="AAA39965.1"/>
    <property type="status" value="JOINED"/>
    <property type="molecule type" value="Genomic_DNA"/>
</dbReference>
<dbReference type="EMBL" id="J04549">
    <property type="protein sequence ID" value="AAA40111.1"/>
    <property type="molecule type" value="mRNA"/>
</dbReference>
<dbReference type="EMBL" id="M33499">
    <property type="protein sequence ID" value="AAA39900.1"/>
    <property type="molecule type" value="Genomic_DNA"/>
</dbReference>
<dbReference type="EMBL" id="M34603">
    <property type="protein sequence ID" value="AAA39991.1"/>
    <property type="molecule type" value="mRNA"/>
</dbReference>
<dbReference type="EMBL" id="AK087960">
    <property type="protein sequence ID" value="BAC40059.1"/>
    <property type="molecule type" value="mRNA"/>
</dbReference>
<dbReference type="EMBL" id="AK151357">
    <property type="protein sequence ID" value="BAE30332.1"/>
    <property type="molecule type" value="mRNA"/>
</dbReference>
<dbReference type="EMBL" id="AK157945">
    <property type="protein sequence ID" value="BAE34275.1"/>
    <property type="molecule type" value="mRNA"/>
</dbReference>
<dbReference type="EMBL" id="BC037076">
    <property type="protein sequence ID" value="AAH37076.1"/>
    <property type="molecule type" value="mRNA"/>
</dbReference>
<dbReference type="CCDS" id="CCDS23889.1"/>
<dbReference type="PIR" id="JQ0791">
    <property type="entry name" value="JQ0791"/>
</dbReference>
<dbReference type="RefSeq" id="NP_001345894.1">
    <property type="nucleotide sequence ID" value="NM_001358965.2"/>
</dbReference>
<dbReference type="RefSeq" id="NP_001415683.1">
    <property type="nucleotide sequence ID" value="NM_001428754.1"/>
</dbReference>
<dbReference type="RefSeq" id="NP_035287.1">
    <property type="nucleotide sequence ID" value="NM_011157.4"/>
</dbReference>
<dbReference type="RefSeq" id="XP_006513438.1">
    <property type="nucleotide sequence ID" value="XM_006513375.2"/>
</dbReference>
<dbReference type="RefSeq" id="XP_006513439.1">
    <property type="nucleotide sequence ID" value="XM_006513376.5"/>
</dbReference>
<dbReference type="RefSeq" id="XP_006513440.1">
    <property type="nucleotide sequence ID" value="XM_006513377.3"/>
</dbReference>
<dbReference type="RefSeq" id="XP_030100813.1">
    <property type="nucleotide sequence ID" value="XM_030244953.1"/>
</dbReference>
<dbReference type="RefSeq" id="XP_030100814.1">
    <property type="nucleotide sequence ID" value="XM_030244954.1"/>
</dbReference>
<dbReference type="BioGRID" id="202359">
    <property type="interactions" value="1"/>
</dbReference>
<dbReference type="FunCoup" id="P13609">
    <property type="interactions" value="66"/>
</dbReference>
<dbReference type="IntAct" id="P13609">
    <property type="interactions" value="1"/>
</dbReference>
<dbReference type="STRING" id="10090.ENSMUSP00000125622"/>
<dbReference type="GlyCosmos" id="P13609">
    <property type="glycosylation" value="8 sites, No reported glycans"/>
</dbReference>
<dbReference type="GlyGen" id="P13609">
    <property type="glycosylation" value="8 sites"/>
</dbReference>
<dbReference type="PaxDb" id="10090-ENSMUSP00000125622"/>
<dbReference type="ProteomicsDB" id="257068"/>
<dbReference type="Antibodypedia" id="609">
    <property type="antibodies" value="232 antibodies from 25 providers"/>
</dbReference>
<dbReference type="DNASU" id="19073"/>
<dbReference type="Ensembl" id="ENSMUST00000020271.13">
    <property type="protein sequence ID" value="ENSMUSP00000020271.7"/>
    <property type="gene ID" value="ENSMUSG00000020077.15"/>
</dbReference>
<dbReference type="Ensembl" id="ENSMUST00000160987.8">
    <property type="protein sequence ID" value="ENSMUSP00000125622.2"/>
    <property type="gene ID" value="ENSMUSG00000020077.15"/>
</dbReference>
<dbReference type="Ensembl" id="ENSMUST00000162161.2">
    <property type="protein sequence ID" value="ENSMUSP00000125533.2"/>
    <property type="gene ID" value="ENSMUSG00000020077.15"/>
</dbReference>
<dbReference type="GeneID" id="19073"/>
<dbReference type="KEGG" id="mmu:19073"/>
<dbReference type="UCSC" id="uc007fhi.1">
    <property type="organism name" value="mouse"/>
</dbReference>
<dbReference type="AGR" id="MGI:97756"/>
<dbReference type="CTD" id="5552"/>
<dbReference type="MGI" id="MGI:97756">
    <property type="gene designation" value="Srgn"/>
</dbReference>
<dbReference type="VEuPathDB" id="HostDB:ENSMUSG00000020077"/>
<dbReference type="eggNOG" id="ENOG502S72N">
    <property type="taxonomic scope" value="Eukaryota"/>
</dbReference>
<dbReference type="GeneTree" id="ENSGT00390000000885"/>
<dbReference type="HOGENOM" id="CLU_142594_0_0_1"/>
<dbReference type="InParanoid" id="P13609"/>
<dbReference type="OMA" id="QWVRCSP"/>
<dbReference type="OrthoDB" id="9884289at2759"/>
<dbReference type="PhylomeDB" id="P13609"/>
<dbReference type="TreeFam" id="TF336310"/>
<dbReference type="Reactome" id="R-MMU-114608">
    <property type="pathway name" value="Platelet degranulation"/>
</dbReference>
<dbReference type="BioGRID-ORCS" id="19073">
    <property type="hits" value="1 hit in 76 CRISPR screens"/>
</dbReference>
<dbReference type="ChiTaRS" id="Srgn">
    <property type="organism name" value="mouse"/>
</dbReference>
<dbReference type="PRO" id="PR:P13609"/>
<dbReference type="Proteomes" id="UP000000589">
    <property type="component" value="Chromosome 10"/>
</dbReference>
<dbReference type="RNAct" id="P13609">
    <property type="molecule type" value="protein"/>
</dbReference>
<dbReference type="Bgee" id="ENSMUSG00000020077">
    <property type="expression patterns" value="Expressed in gastrula and 249 other cell types or tissues"/>
</dbReference>
<dbReference type="ExpressionAtlas" id="P13609">
    <property type="expression patterns" value="baseline and differential"/>
</dbReference>
<dbReference type="GO" id="GO:0044194">
    <property type="term" value="C:cytolytic granule"/>
    <property type="evidence" value="ECO:0007669"/>
    <property type="project" value="UniProtKB-SubCell"/>
</dbReference>
<dbReference type="GO" id="GO:0005615">
    <property type="term" value="C:extracellular space"/>
    <property type="evidence" value="ECO:0000250"/>
    <property type="project" value="UniProtKB"/>
</dbReference>
<dbReference type="GO" id="GO:0005794">
    <property type="term" value="C:Golgi apparatus"/>
    <property type="evidence" value="ECO:0000250"/>
    <property type="project" value="UniProtKB"/>
</dbReference>
<dbReference type="GO" id="GO:0042629">
    <property type="term" value="C:mast cell granule"/>
    <property type="evidence" value="ECO:0000314"/>
    <property type="project" value="UniProtKB"/>
</dbReference>
<dbReference type="GO" id="GO:0006915">
    <property type="term" value="P:apoptotic process"/>
    <property type="evidence" value="ECO:0007669"/>
    <property type="project" value="UniProtKB-KW"/>
</dbReference>
<dbReference type="GO" id="GO:0031214">
    <property type="term" value="P:biomineral tissue development"/>
    <property type="evidence" value="ECO:0007669"/>
    <property type="project" value="UniProtKB-KW"/>
</dbReference>
<dbReference type="GO" id="GO:0140507">
    <property type="term" value="P:granzyme-mediated programmed cell death signaling pathway"/>
    <property type="evidence" value="ECO:0000250"/>
    <property type="project" value="UniProtKB"/>
</dbReference>
<dbReference type="GO" id="GO:0033382">
    <property type="term" value="P:maintenance of granzyme B location in T cell secretory granule"/>
    <property type="evidence" value="ECO:0000315"/>
    <property type="project" value="UniProtKB"/>
</dbReference>
<dbReference type="GO" id="GO:0033373">
    <property type="term" value="P:maintenance of protease location in mast cell secretory granule"/>
    <property type="evidence" value="ECO:0000315"/>
    <property type="project" value="UniProtKB"/>
</dbReference>
<dbReference type="GO" id="GO:0033364">
    <property type="term" value="P:mast cell secretory granule organization"/>
    <property type="evidence" value="ECO:0000315"/>
    <property type="project" value="UniProtKB"/>
</dbReference>
<dbReference type="GO" id="GO:0030502">
    <property type="term" value="P:negative regulation of bone mineralization"/>
    <property type="evidence" value="ECO:0000250"/>
    <property type="project" value="UniProtKB"/>
</dbReference>
<dbReference type="GO" id="GO:0001818">
    <property type="term" value="P:negative regulation of cytokine production"/>
    <property type="evidence" value="ECO:0000315"/>
    <property type="project" value="UniProtKB"/>
</dbReference>
<dbReference type="GO" id="GO:0016485">
    <property type="term" value="P:protein processing"/>
    <property type="evidence" value="ECO:0000314"/>
    <property type="project" value="UniProtKB"/>
</dbReference>
<dbReference type="GO" id="GO:0033371">
    <property type="term" value="P:T cell secretory granule organization"/>
    <property type="evidence" value="ECO:0000315"/>
    <property type="project" value="UniProtKB"/>
</dbReference>
<dbReference type="InterPro" id="IPR007455">
    <property type="entry name" value="Serglycin"/>
</dbReference>
<dbReference type="PANTHER" id="PTHR17178">
    <property type="entry name" value="SECRETORY GRANULE PROTEOGLYCAN CORE PROTEIN"/>
    <property type="match status" value="1"/>
</dbReference>
<dbReference type="PANTHER" id="PTHR17178:SF0">
    <property type="entry name" value="SERGLYCIN"/>
    <property type="match status" value="1"/>
</dbReference>
<dbReference type="Pfam" id="PF04360">
    <property type="entry name" value="Serglycin"/>
    <property type="match status" value="1"/>
</dbReference>
<protein>
    <recommendedName>
        <fullName>Serglycin</fullName>
    </recommendedName>
    <alternativeName>
        <fullName>Mastocytoma proteoglycan core protein</fullName>
    </alternativeName>
    <alternativeName>
        <fullName>Secretory granule proteoglycan core protein</fullName>
    </alternativeName>
    <alternativeName>
        <fullName>gp600</fullName>
    </alternativeName>
</protein>
<organism>
    <name type="scientific">Mus musculus</name>
    <name type="common">Mouse</name>
    <dbReference type="NCBI Taxonomy" id="10090"/>
    <lineage>
        <taxon>Eukaryota</taxon>
        <taxon>Metazoa</taxon>
        <taxon>Chordata</taxon>
        <taxon>Craniata</taxon>
        <taxon>Vertebrata</taxon>
        <taxon>Euteleostomi</taxon>
        <taxon>Mammalia</taxon>
        <taxon>Eutheria</taxon>
        <taxon>Euarchontoglires</taxon>
        <taxon>Glires</taxon>
        <taxon>Rodentia</taxon>
        <taxon>Myomorpha</taxon>
        <taxon>Muroidea</taxon>
        <taxon>Muridae</taxon>
        <taxon>Murinae</taxon>
        <taxon>Mus</taxon>
        <taxon>Mus</taxon>
    </lineage>
</organism>
<reference key="1">
    <citation type="journal article" date="1989" name="Biochem. J.">
        <title>Primary structure of a mouse mastocytoma proteoglycan core protein.</title>
        <authorList>
            <person name="Kjellen L."/>
            <person name="Pettersson L."/>
            <person name="Lillhager P."/>
            <person name="Steen M.L."/>
            <person name="Pettersson U."/>
            <person name="Lehtonen P."/>
            <person name="Karlsson T."/>
            <person name="Ruoslahti E."/>
            <person name="Hellman L."/>
        </authorList>
    </citation>
    <scope>NUCLEOTIDE SEQUENCE [MRNA]</scope>
</reference>
<reference key="2">
    <citation type="journal article" date="1989" name="J. Biol. Chem.">
        <title>Cloning and characterization of the mouse gene that encodes the peptide core of secretory granule proteoglycans and expression of this gene in transfected rat-1 fibroblasts.</title>
        <authorList>
            <person name="Avraham S."/>
            <person name="Austen K.F."/>
            <person name="Nicodemus C.F."/>
            <person name="Gartner M.C."/>
            <person name="Stevens R.L."/>
        </authorList>
    </citation>
    <scope>NUCLEOTIDE SEQUENCE [GENOMIC DNA]</scope>
</reference>
<reference key="3">
    <citation type="journal article" date="1989" name="Proc. Natl. Acad. Sci. U.S.A.">
        <title>Molecular cloning of a cDNA that encodes the peptide core of a mouse mast cell secretory granule proteoglycan and comparison with the analogous rat and human cDNA.</title>
        <authorList>
            <person name="Avraham S."/>
            <person name="Stevens R.L."/>
            <person name="Nicodemus C.F."/>
            <person name="Gartner M.C."/>
            <person name="Austen K.F."/>
            <person name="Weis J.H."/>
        </authorList>
    </citation>
    <scope>NUCLEOTIDE SEQUENCE [MRNA]</scope>
</reference>
<reference key="4">
    <citation type="journal article" date="1990" name="Gene">
        <title>Cloning and structural analysis of a gene encoding a mouse mastocytoma proteoglycan core protein; analysis of its evolutionary relation to three cross hybridizing regions in the mouse genome.</title>
        <authorList>
            <person name="Angerth T."/>
            <person name="Huang R."/>
            <person name="Aveskogh M."/>
            <person name="Pettersson I."/>
            <person name="Kjellen L."/>
            <person name="Hellman L."/>
        </authorList>
    </citation>
    <scope>NUCLEOTIDE SEQUENCE [GENOMIC DNA]</scope>
</reference>
<reference key="5">
    <citation type="journal article" date="1993" name="Mol. Immunol.">
        <title>Induction of a proteoglycan core protein mRNA in mouse T lymphocytes.</title>
        <authorList>
            <person name="Elliott J.F."/>
            <person name="Miller C.L."/>
            <person name="Pohajdak B."/>
            <person name="Talbot D."/>
            <person name="Helgason C.D."/>
            <person name="Bleackley R.C."/>
            <person name="Paetkau V."/>
        </authorList>
    </citation>
    <scope>NUCLEOTIDE SEQUENCE [MRNA]</scope>
    <scope>INDUCTION</scope>
</reference>
<reference key="6">
    <citation type="journal article" date="2005" name="Science">
        <title>The transcriptional landscape of the mammalian genome.</title>
        <authorList>
            <person name="Carninci P."/>
            <person name="Kasukawa T."/>
            <person name="Katayama S."/>
            <person name="Gough J."/>
            <person name="Frith M.C."/>
            <person name="Maeda N."/>
            <person name="Oyama R."/>
            <person name="Ravasi T."/>
            <person name="Lenhard B."/>
            <person name="Wells C."/>
            <person name="Kodzius R."/>
            <person name="Shimokawa K."/>
            <person name="Bajic V.B."/>
            <person name="Brenner S.E."/>
            <person name="Batalov S."/>
            <person name="Forrest A.R."/>
            <person name="Zavolan M."/>
            <person name="Davis M.J."/>
            <person name="Wilming L.G."/>
            <person name="Aidinis V."/>
            <person name="Allen J.E."/>
            <person name="Ambesi-Impiombato A."/>
            <person name="Apweiler R."/>
            <person name="Aturaliya R.N."/>
            <person name="Bailey T.L."/>
            <person name="Bansal M."/>
            <person name="Baxter L."/>
            <person name="Beisel K.W."/>
            <person name="Bersano T."/>
            <person name="Bono H."/>
            <person name="Chalk A.M."/>
            <person name="Chiu K.P."/>
            <person name="Choudhary V."/>
            <person name="Christoffels A."/>
            <person name="Clutterbuck D.R."/>
            <person name="Crowe M.L."/>
            <person name="Dalla E."/>
            <person name="Dalrymple B.P."/>
            <person name="de Bono B."/>
            <person name="Della Gatta G."/>
            <person name="di Bernardo D."/>
            <person name="Down T."/>
            <person name="Engstrom P."/>
            <person name="Fagiolini M."/>
            <person name="Faulkner G."/>
            <person name="Fletcher C.F."/>
            <person name="Fukushima T."/>
            <person name="Furuno M."/>
            <person name="Futaki S."/>
            <person name="Gariboldi M."/>
            <person name="Georgii-Hemming P."/>
            <person name="Gingeras T.R."/>
            <person name="Gojobori T."/>
            <person name="Green R.E."/>
            <person name="Gustincich S."/>
            <person name="Harbers M."/>
            <person name="Hayashi Y."/>
            <person name="Hensch T.K."/>
            <person name="Hirokawa N."/>
            <person name="Hill D."/>
            <person name="Huminiecki L."/>
            <person name="Iacono M."/>
            <person name="Ikeo K."/>
            <person name="Iwama A."/>
            <person name="Ishikawa T."/>
            <person name="Jakt M."/>
            <person name="Kanapin A."/>
            <person name="Katoh M."/>
            <person name="Kawasawa Y."/>
            <person name="Kelso J."/>
            <person name="Kitamura H."/>
            <person name="Kitano H."/>
            <person name="Kollias G."/>
            <person name="Krishnan S.P."/>
            <person name="Kruger A."/>
            <person name="Kummerfeld S.K."/>
            <person name="Kurochkin I.V."/>
            <person name="Lareau L.F."/>
            <person name="Lazarevic D."/>
            <person name="Lipovich L."/>
            <person name="Liu J."/>
            <person name="Liuni S."/>
            <person name="McWilliam S."/>
            <person name="Madan Babu M."/>
            <person name="Madera M."/>
            <person name="Marchionni L."/>
            <person name="Matsuda H."/>
            <person name="Matsuzawa S."/>
            <person name="Miki H."/>
            <person name="Mignone F."/>
            <person name="Miyake S."/>
            <person name="Morris K."/>
            <person name="Mottagui-Tabar S."/>
            <person name="Mulder N."/>
            <person name="Nakano N."/>
            <person name="Nakauchi H."/>
            <person name="Ng P."/>
            <person name="Nilsson R."/>
            <person name="Nishiguchi S."/>
            <person name="Nishikawa S."/>
            <person name="Nori F."/>
            <person name="Ohara O."/>
            <person name="Okazaki Y."/>
            <person name="Orlando V."/>
            <person name="Pang K.C."/>
            <person name="Pavan W.J."/>
            <person name="Pavesi G."/>
            <person name="Pesole G."/>
            <person name="Petrovsky N."/>
            <person name="Piazza S."/>
            <person name="Reed J."/>
            <person name="Reid J.F."/>
            <person name="Ring B.Z."/>
            <person name="Ringwald M."/>
            <person name="Rost B."/>
            <person name="Ruan Y."/>
            <person name="Salzberg S.L."/>
            <person name="Sandelin A."/>
            <person name="Schneider C."/>
            <person name="Schoenbach C."/>
            <person name="Sekiguchi K."/>
            <person name="Semple C.A."/>
            <person name="Seno S."/>
            <person name="Sessa L."/>
            <person name="Sheng Y."/>
            <person name="Shibata Y."/>
            <person name="Shimada H."/>
            <person name="Shimada K."/>
            <person name="Silva D."/>
            <person name="Sinclair B."/>
            <person name="Sperling S."/>
            <person name="Stupka E."/>
            <person name="Sugiura K."/>
            <person name="Sultana R."/>
            <person name="Takenaka Y."/>
            <person name="Taki K."/>
            <person name="Tammoja K."/>
            <person name="Tan S.L."/>
            <person name="Tang S."/>
            <person name="Taylor M.S."/>
            <person name="Tegner J."/>
            <person name="Teichmann S.A."/>
            <person name="Ueda H.R."/>
            <person name="van Nimwegen E."/>
            <person name="Verardo R."/>
            <person name="Wei C.L."/>
            <person name="Yagi K."/>
            <person name="Yamanishi H."/>
            <person name="Zabarovsky E."/>
            <person name="Zhu S."/>
            <person name="Zimmer A."/>
            <person name="Hide W."/>
            <person name="Bult C."/>
            <person name="Grimmond S.M."/>
            <person name="Teasdale R.D."/>
            <person name="Liu E.T."/>
            <person name="Brusic V."/>
            <person name="Quackenbush J."/>
            <person name="Wahlestedt C."/>
            <person name="Mattick J.S."/>
            <person name="Hume D.A."/>
            <person name="Kai C."/>
            <person name="Sasaki D."/>
            <person name="Tomaru Y."/>
            <person name="Fukuda S."/>
            <person name="Kanamori-Katayama M."/>
            <person name="Suzuki M."/>
            <person name="Aoki J."/>
            <person name="Arakawa T."/>
            <person name="Iida J."/>
            <person name="Imamura K."/>
            <person name="Itoh M."/>
            <person name="Kato T."/>
            <person name="Kawaji H."/>
            <person name="Kawagashira N."/>
            <person name="Kawashima T."/>
            <person name="Kojima M."/>
            <person name="Kondo S."/>
            <person name="Konno H."/>
            <person name="Nakano K."/>
            <person name="Ninomiya N."/>
            <person name="Nishio T."/>
            <person name="Okada M."/>
            <person name="Plessy C."/>
            <person name="Shibata K."/>
            <person name="Shiraki T."/>
            <person name="Suzuki S."/>
            <person name="Tagami M."/>
            <person name="Waki K."/>
            <person name="Watahiki A."/>
            <person name="Okamura-Oho Y."/>
            <person name="Suzuki H."/>
            <person name="Kawai J."/>
            <person name="Hayashizaki Y."/>
        </authorList>
    </citation>
    <scope>NUCLEOTIDE SEQUENCE [LARGE SCALE MRNA]</scope>
    <source>
        <strain>C57BL/6J</strain>
        <strain>NOD</strain>
        <tissue>Bone marrow</tissue>
        <tissue>Inner ear</tissue>
        <tissue>Thymus</tissue>
    </source>
</reference>
<reference key="7">
    <citation type="journal article" date="2004" name="Genome Res.">
        <title>The status, quality, and expansion of the NIH full-length cDNA project: the Mammalian Gene Collection (MGC).</title>
        <authorList>
            <consortium name="The MGC Project Team"/>
        </authorList>
    </citation>
    <scope>NUCLEOTIDE SEQUENCE [LARGE SCALE MRNA]</scope>
    <source>
        <strain>Czech II</strain>
        <tissue>Mammary gland</tissue>
    </source>
</reference>
<reference key="8">
    <citation type="journal article" date="1995" name="J. Biol. Chem.">
        <title>A novel ligand for CD44 is serglycin, a hematopoietic cell lineage-specific proteoglycan. Possible involvement in lymphoid cell adherence and activation.</title>
        <authorList>
            <person name="Toyama-Sorimachi N."/>
            <person name="Sorimachi H."/>
            <person name="Tobita Y."/>
            <person name="Kitamura F."/>
            <person name="Yagita H."/>
            <person name="Suzuki K."/>
            <person name="Miyasaka M."/>
        </authorList>
    </citation>
    <scope>PROTEIN SEQUENCE OF 86-101</scope>
    <scope>INTERACTION WITH CD44</scope>
    <scope>GLYCOSYLATION</scope>
</reference>
<reference key="9">
    <citation type="journal article" date="2004" name="J. Biol. Chem.">
        <title>Serglycin is essential for maturation of mast cell secretory granule.</title>
        <authorList>
            <person name="Abrink M."/>
            <person name="Grujic M."/>
            <person name="Pejler G."/>
        </authorList>
    </citation>
    <scope>FUNCTION</scope>
    <scope>DISRUPTION PHENOTYPE</scope>
</reference>
<reference key="10">
    <citation type="journal article" date="2005" name="J. Biol. Chem.">
        <title>Serglycin-deficient cytotoxic T lymphocytes display defective secretory granule maturation and granzyme B storage.</title>
        <authorList>
            <person name="Grujic M."/>
            <person name="Braga T."/>
            <person name="Lukinius A."/>
            <person name="Eloranta M.-L."/>
            <person name="Knight S.D."/>
            <person name="Pejler G."/>
            <person name="Abrink M."/>
        </authorList>
    </citation>
    <scope>FUNCTION</scope>
    <scope>SUBCELLULAR LOCATION</scope>
</reference>
<reference key="11">
    <citation type="journal article" date="2006" name="Biol. Chem.">
        <title>Mast cell-dependent activation of pro matrix metalloprotease 2: a role for serglycin proteoglycan-dependent mast cell proteases.</title>
        <authorList>
            <person name="Lundequist A."/>
            <person name="Abrink M."/>
            <person name="Pejler G."/>
        </authorList>
    </citation>
    <scope>FUNCTION</scope>
    <scope>DISRUPTION PHENOTYPE</scope>
</reference>
<reference key="12">
    <citation type="journal article" date="2006" name="FEBS J.">
        <title>A role for serglycin proteoglycan in granular retention and processing of mast cell secretory granule components.</title>
        <authorList>
            <person name="Henningsson F."/>
            <person name="Hergeth S."/>
            <person name="Cortelius R."/>
            <person name="Abrink M."/>
            <person name="Pejler G."/>
        </authorList>
    </citation>
    <scope>FUNCTION</scope>
    <scope>GLYCOSYLATION</scope>
    <scope>DISRUPTION PHENOTYPE</scope>
</reference>
<reference key="13">
    <citation type="journal article" date="2006" name="J. Biol. Chem.">
        <title>Serglycin is the major secreted proteoglycan in macrophages and has a role in the regulation of macrophage tumor necrosis factor-alpha secretion in response to lipopolysaccharide.</title>
        <authorList>
            <person name="Zernichow L."/>
            <person name="Abrink M."/>
            <person name="Hallgren J."/>
            <person name="Grujic M."/>
            <person name="Pejler G."/>
            <person name="Kolset S.O."/>
        </authorList>
    </citation>
    <scope>FUNCTION</scope>
</reference>
<reference key="14">
    <citation type="journal article" date="2007" name="Biochem. J.">
        <title>Serglycin proteoglycan is required for secretory granule integrity in mucosal mast cells.</title>
        <authorList>
            <person name="Braga T."/>
            <person name="Grujic M."/>
            <person name="Lukinius A."/>
            <person name="Hellman L."/>
            <person name="Abrink M."/>
            <person name="Pejler G."/>
        </authorList>
    </citation>
    <scope>FUNCTION</scope>
    <scope>DISRUPTION PHENOTYPE</scope>
</reference>
<reference key="15">
    <citation type="journal article" date="2007" name="Blood">
        <title>Neutrophil elastase depends on serglycin proteoglycan for localization in granules.</title>
        <authorList>
            <person name="Niemann C.U."/>
            <person name="Abrink M."/>
            <person name="Pejler G."/>
            <person name="Fischer R.L."/>
            <person name="Christensen E.I."/>
            <person name="Knight S.D."/>
            <person name="Borregaard N."/>
        </authorList>
    </citation>
    <scope>FUNCTION</scope>
    <scope>DISRUPTION PHENOTYPE</scope>
</reference>
<reference key="16">
    <citation type="journal article" date="2010" name="Cell">
        <title>A tissue-specific atlas of mouse protein phosphorylation and expression.</title>
        <authorList>
            <person name="Huttlin E.L."/>
            <person name="Jedrychowski M.P."/>
            <person name="Elias J.E."/>
            <person name="Goswami T."/>
            <person name="Rad R."/>
            <person name="Beausoleil S.A."/>
            <person name="Villen J."/>
            <person name="Haas W."/>
            <person name="Sowa M.E."/>
            <person name="Gygi S.P."/>
        </authorList>
    </citation>
    <scope>IDENTIFICATION BY MASS SPECTROMETRY [LARGE SCALE ANALYSIS]</scope>
    <source>
        <tissue>Spleen</tissue>
    </source>
</reference>
<accession>P13609</accession>
<accession>Q3TZD4</accession>
<accession>Q8C2U2</accession>
<keyword id="KW-0053">Apoptosis</keyword>
<keyword id="KW-0091">Biomineralization</keyword>
<keyword id="KW-0903">Direct protein sequencing</keyword>
<keyword id="KW-1015">Disulfide bond</keyword>
<keyword id="KW-0325">Glycoprotein</keyword>
<keyword id="KW-0333">Golgi apparatus</keyword>
<keyword id="KW-0458">Lysosome</keyword>
<keyword id="KW-0654">Proteoglycan</keyword>
<keyword id="KW-1185">Reference proteome</keyword>
<keyword id="KW-0677">Repeat</keyword>
<keyword id="KW-0964">Secreted</keyword>
<keyword id="KW-0732">Signal</keyword>
<comment type="function">
    <text evidence="5 6 7 8 9 10 11">Plays a role in formation of mast cell secretory granules and mediates storage of various compounds in secretory vesicles. Required for storage of some proteases in both connective tissue and mucosal mast cells and for storage of granzyme B in T-lymphocytes. Plays a role in localizing neutrophil elastase in azurophil granules of neutrophils. Mediates processing of MMP2. Plays a role in cytotoxic cell granule-mediated apoptosis by forming a complex with granzyme B which is delivered to cells by perforin to induce apoptosis. Regulates the secretion of TNF-alpha and may also regulate protease secretion. Inhibits bone mineralization.</text>
</comment>
<comment type="subunit">
    <text>Binds to activated CD44 and to GZMB.</text>
</comment>
<comment type="subcellular location">
    <subcellularLocation>
        <location evidence="6">Cytoplasmic granule</location>
    </subcellularLocation>
    <subcellularLocation>
        <location evidence="2">Cytolytic granule</location>
    </subcellularLocation>
    <subcellularLocation>
        <location evidence="6">Secreted</location>
        <location evidence="6">Extracellular space</location>
    </subcellularLocation>
    <subcellularLocation>
        <location evidence="2">Golgi apparatus</location>
    </subcellularLocation>
    <text evidence="2 6">Found in mast cell granules and in cytoplasmic granules of cytolytic T-lymphocytes from where it is secreted upon cell activation (PubMed:16046402). Secreted constitutively by endothelial cells and macrophages. Located to Golgi apparatus during neutrophil differentiation (By similarity).</text>
</comment>
<comment type="induction">
    <text evidence="13">By phorbol myristate acetate in T-lymphocytes. This induction is not inhibited by cyclosporine.</text>
</comment>
<comment type="PTM">
    <text evidence="8 12">O-glycosylated; contains chondroitin sulfate and heparan sulfate.</text>
</comment>
<comment type="disruption phenotype">
    <text evidence="5 8 9 10 11">Mice develop normally and are fertile but display mast cell granule and T-lymphocyte secretory granule defects. Granules are more amorphous than in the wild-type and show a less defined dense core formation. There is a lack of mast cell-specific protease activity although mRNAs for a variety of proteases are detected and storage of granzyme B is affected in T-lymphocytes. Neutrophil granules display a lack of neutrophil elastase and processing of MMP2 is abrogated. Macrophages show no major morphological defects.</text>
</comment>
<comment type="similarity">
    <text evidence="14">Belongs to the serglycin family.</text>
</comment>
<sequence length="152" mass="16711">MQVPVGSRLVLALAFVLVWGSSVQGYPARRARYQWVRCKPNGFFANCIEEKGPQFDLIDESNNIGPPMNNPVLMEGPSKDFISNYDDYGSGSGSGSGSGSGSGSGSGSGFLGDMEWEYQPTDESNIVYFNYKPFDRILTEQNQDQPEDDFII</sequence>
<name>SRGN_MOUSE</name>